<reference key="1">
    <citation type="submission" date="2003-10" db="EMBL/GenBank/DDBJ databases">
        <title>The complete genome sequence of the alkaliphilic Bacillus clausii KSM-K16.</title>
        <authorList>
            <person name="Takaki Y."/>
            <person name="Kageyama Y."/>
            <person name="Shimamura S."/>
            <person name="Suzuki H."/>
            <person name="Nishi S."/>
            <person name="Hatada Y."/>
            <person name="Kawai S."/>
            <person name="Ito S."/>
            <person name="Horikoshi K."/>
        </authorList>
    </citation>
    <scope>NUCLEOTIDE SEQUENCE [LARGE SCALE GENOMIC DNA]</scope>
    <source>
        <strain>KSM-K16</strain>
    </source>
</reference>
<name>Y2045_SHOC1</name>
<keyword id="KW-1185">Reference proteome</keyword>
<protein>
    <recommendedName>
        <fullName evidence="1">Bacilliredoxin ABC2045</fullName>
    </recommendedName>
</protein>
<evidence type="ECO:0000305" key="1"/>
<comment type="similarity">
    <text evidence="1">Belongs to the bacilliredoxin family.</text>
</comment>
<sequence>MSMAYEEYMRQVVLPMRQELTDAGFKELTTAEAVEDYIADAEGTTLVFINSVCGCAAGLARPAAIYSLQHDHTPDHLVTVFAGQDKEATAAMRSKFPDYPPSSPSMALLKGTEVVHFIPREDIEGAEPEAIVRNLALAYNEHCQK</sequence>
<feature type="chain" id="PRO_0000271981" description="Bacilliredoxin ABC2045">
    <location>
        <begin position="1"/>
        <end position="145"/>
    </location>
</feature>
<gene>
    <name type="ordered locus">ABC2045</name>
</gene>
<proteinExistence type="inferred from homology"/>
<dbReference type="EMBL" id="AP006627">
    <property type="protein sequence ID" value="BAD64580.1"/>
    <property type="molecule type" value="Genomic_DNA"/>
</dbReference>
<dbReference type="RefSeq" id="WP_011246888.1">
    <property type="nucleotide sequence ID" value="NC_006582.1"/>
</dbReference>
<dbReference type="SMR" id="Q5WGC5"/>
<dbReference type="STRING" id="66692.ABC2045"/>
<dbReference type="KEGG" id="bcl:ABC2045"/>
<dbReference type="eggNOG" id="ENOG502ZBVN">
    <property type="taxonomic scope" value="Bacteria"/>
</dbReference>
<dbReference type="HOGENOM" id="CLU_132521_0_0_9"/>
<dbReference type="OrthoDB" id="9793981at2"/>
<dbReference type="Proteomes" id="UP000001168">
    <property type="component" value="Chromosome"/>
</dbReference>
<dbReference type="GO" id="GO:0045454">
    <property type="term" value="P:cell redox homeostasis"/>
    <property type="evidence" value="ECO:0000250"/>
    <property type="project" value="UniProtKB"/>
</dbReference>
<dbReference type="Gene3D" id="6.10.250.2150">
    <property type="match status" value="1"/>
</dbReference>
<dbReference type="Gene3D" id="3.40.30.10">
    <property type="entry name" value="Glutaredoxin"/>
    <property type="match status" value="1"/>
</dbReference>
<dbReference type="InterPro" id="IPR009474">
    <property type="entry name" value="BrxB/BrxA"/>
</dbReference>
<dbReference type="NCBIfam" id="TIGR04191">
    <property type="entry name" value="YphP_YqiW"/>
    <property type="match status" value="1"/>
</dbReference>
<dbReference type="PANTHER" id="PTHR40052:SF2">
    <property type="entry name" value="BACILLIREDOXIN BRXA"/>
    <property type="match status" value="1"/>
</dbReference>
<dbReference type="PANTHER" id="PTHR40052">
    <property type="entry name" value="UPF0403 PROTEIN YQIW-RELATED"/>
    <property type="match status" value="1"/>
</dbReference>
<dbReference type="Pfam" id="PF06491">
    <property type="entry name" value="Disulph_isomer"/>
    <property type="match status" value="1"/>
</dbReference>
<organism>
    <name type="scientific">Shouchella clausii (strain KSM-K16)</name>
    <name type="common">Alkalihalobacillus clausii</name>
    <dbReference type="NCBI Taxonomy" id="66692"/>
    <lineage>
        <taxon>Bacteria</taxon>
        <taxon>Bacillati</taxon>
        <taxon>Bacillota</taxon>
        <taxon>Bacilli</taxon>
        <taxon>Bacillales</taxon>
        <taxon>Bacillaceae</taxon>
        <taxon>Shouchella</taxon>
    </lineage>
</organism>
<accession>Q5WGC5</accession>